<sequence length="524" mass="55225">MAVTSPWFRAVVSAAQMQEIENWLFTQGMPVAALMEKAALQTAQRLLTLYPLSTYPRIGVVVGPGHNGGDGLVVARELKLQGYQVQVLQPLDKLKPLTQNHVDYGKSLGIPWVDGVQALAHCDLIIDALFGVGLTRLITGAIADLITTINNLPIPVVSIDLPSGIETDTGEILGVAVEADRSFCLGLWKRAYFQDRALAHLGQTELLGIGLPPQAIANVLGEVWPVQVLGADQAQQTLPLSRPLVTHKYQQGHLLLICGSQQYAGGALLTTLGARASGVGMVTVAVPMGIKALLHSQCPEVLVKGLLETPSGAIAGLGNLDLSRYSAVALGPGLGSDVGPLVEEVLSVNCPLILDADGLNQLAQQQLLPLLAVRTAPTVLTPHGGEFKRLFPDIDQGDRLTAVQTAAAMCQATVLLKGAKTVIASPTGPTWAIKDSTPALARGGSGDVLTGLMGGILAQPEKFDLAQRVATAAWWHAQAGILASQQRTILGVDAQHLAEYLIPACRQWLGPNVANWPANLSHSS</sequence>
<feature type="chain" id="PRO_0000119049" description="Bifunctional NAD(P)H-hydrate repair enzyme Nnr">
    <location>
        <begin position="1"/>
        <end position="524"/>
    </location>
</feature>
<feature type="domain" description="YjeF N-terminal">
    <location>
        <begin position="17"/>
        <end position="217"/>
    </location>
</feature>
<feature type="domain" description="YjeF C-terminal">
    <location>
        <begin position="231"/>
        <end position="508"/>
    </location>
</feature>
<feature type="region of interest" description="NAD(P)H-hydrate epimerase" evidence="1">
    <location>
        <begin position="1"/>
        <end position="223"/>
    </location>
</feature>
<feature type="region of interest" description="NADPHX 1; for epimerase activity" evidence="1">
    <location>
        <begin position="66"/>
        <end position="70"/>
    </location>
</feature>
<feature type="region of interest" description="NADPHX 1; for epimerase activity" evidence="1">
    <location>
        <begin position="131"/>
        <end position="137"/>
    </location>
</feature>
<feature type="region of interest" description="ADP-dependent (S)-NAD(P)H-hydrate dehydratase" evidence="1">
    <location>
        <begin position="231"/>
        <end position="524"/>
    </location>
</feature>
<feature type="region of interest" description="NADPHX 2; for dehydratase activity" evidence="1">
    <location>
        <begin position="383"/>
        <end position="389"/>
    </location>
</feature>
<feature type="binding site" evidence="1">
    <location>
        <position position="67"/>
    </location>
    <ligand>
        <name>K(+)</name>
        <dbReference type="ChEBI" id="CHEBI:29103"/>
    </ligand>
</feature>
<feature type="binding site" evidence="1">
    <location>
        <position position="127"/>
    </location>
    <ligand>
        <name>K(+)</name>
        <dbReference type="ChEBI" id="CHEBI:29103"/>
    </ligand>
</feature>
<feature type="binding site" evidence="1">
    <location>
        <position position="160"/>
    </location>
    <ligand>
        <name>(6S)-NADPHX</name>
        <dbReference type="ChEBI" id="CHEBI:64076"/>
        <label>1</label>
        <note>for epimerase activity</note>
    </ligand>
</feature>
<feature type="binding site" evidence="1">
    <location>
        <position position="163"/>
    </location>
    <ligand>
        <name>K(+)</name>
        <dbReference type="ChEBI" id="CHEBI:29103"/>
    </ligand>
</feature>
<feature type="binding site" evidence="1">
    <location>
        <position position="333"/>
    </location>
    <ligand>
        <name>(6S)-NADPHX</name>
        <dbReference type="ChEBI" id="CHEBI:64076"/>
        <label>2</label>
        <note>for dehydratase activity</note>
    </ligand>
</feature>
<feature type="binding site" evidence="1">
    <location>
        <begin position="417"/>
        <end position="421"/>
    </location>
    <ligand>
        <name>ADP</name>
        <dbReference type="ChEBI" id="CHEBI:456216"/>
    </ligand>
</feature>
<feature type="binding site" evidence="1">
    <location>
        <begin position="437"/>
        <end position="446"/>
    </location>
    <ligand>
        <name>ADP</name>
        <dbReference type="ChEBI" id="CHEBI:456216"/>
    </ligand>
</feature>
<feature type="binding site" evidence="1">
    <location>
        <position position="447"/>
    </location>
    <ligand>
        <name>(6S)-NADPHX</name>
        <dbReference type="ChEBI" id="CHEBI:64076"/>
        <label>2</label>
        <note>for dehydratase activity</note>
    </ligand>
</feature>
<reference key="1">
    <citation type="journal article" date="1996" name="DNA Res.">
        <title>Sequence analysis of the genome of the unicellular cyanobacterium Synechocystis sp. strain PCC6803. II. Sequence determination of the entire genome and assignment of potential protein-coding regions.</title>
        <authorList>
            <person name="Kaneko T."/>
            <person name="Sato S."/>
            <person name="Kotani H."/>
            <person name="Tanaka A."/>
            <person name="Asamizu E."/>
            <person name="Nakamura Y."/>
            <person name="Miyajima N."/>
            <person name="Hirosawa M."/>
            <person name="Sugiura M."/>
            <person name="Sasamoto S."/>
            <person name="Kimura T."/>
            <person name="Hosouchi T."/>
            <person name="Matsuno A."/>
            <person name="Muraki A."/>
            <person name="Nakazaki N."/>
            <person name="Naruo K."/>
            <person name="Okumura S."/>
            <person name="Shimpo S."/>
            <person name="Takeuchi C."/>
            <person name="Wada T."/>
            <person name="Watanabe A."/>
            <person name="Yamada M."/>
            <person name="Yasuda M."/>
            <person name="Tabata S."/>
        </authorList>
    </citation>
    <scope>NUCLEOTIDE SEQUENCE [LARGE SCALE GENOMIC DNA]</scope>
    <source>
        <strain>ATCC 27184 / PCC 6803 / Kazusa</strain>
    </source>
</reference>
<gene>
    <name type="primary">nnr</name>
    <name type="ordered locus">sll1433</name>
</gene>
<dbReference type="EC" id="4.2.1.136"/>
<dbReference type="EC" id="5.1.99.6"/>
<dbReference type="EMBL" id="BA000022">
    <property type="protein sequence ID" value="BAA18311.1"/>
    <property type="molecule type" value="Genomic_DNA"/>
</dbReference>
<dbReference type="PIR" id="S75852">
    <property type="entry name" value="S75852"/>
</dbReference>
<dbReference type="SMR" id="P74217"/>
<dbReference type="FunCoup" id="P74217">
    <property type="interactions" value="138"/>
</dbReference>
<dbReference type="IntAct" id="P74217">
    <property type="interactions" value="4"/>
</dbReference>
<dbReference type="STRING" id="1148.gene:10499187"/>
<dbReference type="PaxDb" id="1148-1653397"/>
<dbReference type="EnsemblBacteria" id="BAA18311">
    <property type="protein sequence ID" value="BAA18311"/>
    <property type="gene ID" value="BAA18311"/>
</dbReference>
<dbReference type="KEGG" id="syn:sll1433"/>
<dbReference type="eggNOG" id="COG0062">
    <property type="taxonomic scope" value="Bacteria"/>
</dbReference>
<dbReference type="eggNOG" id="COG0063">
    <property type="taxonomic scope" value="Bacteria"/>
</dbReference>
<dbReference type="InParanoid" id="P74217"/>
<dbReference type="PhylomeDB" id="P74217"/>
<dbReference type="Proteomes" id="UP000001425">
    <property type="component" value="Chromosome"/>
</dbReference>
<dbReference type="GO" id="GO:0052855">
    <property type="term" value="F:ADP-dependent NAD(P)H-hydrate dehydratase activity"/>
    <property type="evidence" value="ECO:0000318"/>
    <property type="project" value="GO_Central"/>
</dbReference>
<dbReference type="GO" id="GO:0005524">
    <property type="term" value="F:ATP binding"/>
    <property type="evidence" value="ECO:0007669"/>
    <property type="project" value="UniProtKB-KW"/>
</dbReference>
<dbReference type="GO" id="GO:0046872">
    <property type="term" value="F:metal ion binding"/>
    <property type="evidence" value="ECO:0007669"/>
    <property type="project" value="UniProtKB-KW"/>
</dbReference>
<dbReference type="GO" id="GO:0052856">
    <property type="term" value="F:NAD(P)HX epimerase activity"/>
    <property type="evidence" value="ECO:0000318"/>
    <property type="project" value="GO_Central"/>
</dbReference>
<dbReference type="GO" id="GO:0110051">
    <property type="term" value="P:metabolite repair"/>
    <property type="evidence" value="ECO:0000318"/>
    <property type="project" value="GO_Central"/>
</dbReference>
<dbReference type="GO" id="GO:0046496">
    <property type="term" value="P:nicotinamide nucleotide metabolic process"/>
    <property type="evidence" value="ECO:0007669"/>
    <property type="project" value="UniProtKB-UniRule"/>
</dbReference>
<dbReference type="CDD" id="cd01171">
    <property type="entry name" value="YXKO-related"/>
    <property type="match status" value="1"/>
</dbReference>
<dbReference type="FunFam" id="3.40.1190.20:FF:000134">
    <property type="entry name" value="Bifunctional NAD(P)H-hydrate repair enzyme Nnr"/>
    <property type="match status" value="1"/>
</dbReference>
<dbReference type="FunFam" id="3.40.50.10260:FF:000015">
    <property type="entry name" value="Multifunctional fusion protein"/>
    <property type="match status" value="1"/>
</dbReference>
<dbReference type="Gene3D" id="3.40.1190.20">
    <property type="match status" value="1"/>
</dbReference>
<dbReference type="Gene3D" id="3.40.50.10260">
    <property type="entry name" value="YjeF N-terminal domain"/>
    <property type="match status" value="1"/>
</dbReference>
<dbReference type="HAMAP" id="MF_01965">
    <property type="entry name" value="NADHX_dehydratase"/>
    <property type="match status" value="1"/>
</dbReference>
<dbReference type="HAMAP" id="MF_01966">
    <property type="entry name" value="NADHX_epimerase"/>
    <property type="match status" value="1"/>
</dbReference>
<dbReference type="InterPro" id="IPR017953">
    <property type="entry name" value="Carbohydrate_kinase_pred_CS"/>
</dbReference>
<dbReference type="InterPro" id="IPR000631">
    <property type="entry name" value="CARKD"/>
</dbReference>
<dbReference type="InterPro" id="IPR030677">
    <property type="entry name" value="Nnr"/>
</dbReference>
<dbReference type="InterPro" id="IPR029056">
    <property type="entry name" value="Ribokinase-like"/>
</dbReference>
<dbReference type="InterPro" id="IPR004443">
    <property type="entry name" value="YjeF_N_dom"/>
</dbReference>
<dbReference type="InterPro" id="IPR036652">
    <property type="entry name" value="YjeF_N_dom_sf"/>
</dbReference>
<dbReference type="NCBIfam" id="TIGR00196">
    <property type="entry name" value="yjeF_cterm"/>
    <property type="match status" value="1"/>
</dbReference>
<dbReference type="NCBIfam" id="TIGR00197">
    <property type="entry name" value="yjeF_nterm"/>
    <property type="match status" value="1"/>
</dbReference>
<dbReference type="PANTHER" id="PTHR12592:SF0">
    <property type="entry name" value="ATP-DEPENDENT (S)-NAD(P)H-HYDRATE DEHYDRATASE"/>
    <property type="match status" value="1"/>
</dbReference>
<dbReference type="PANTHER" id="PTHR12592">
    <property type="entry name" value="ATP-DEPENDENT (S)-NAD(P)H-HYDRATE DEHYDRATASE FAMILY MEMBER"/>
    <property type="match status" value="1"/>
</dbReference>
<dbReference type="Pfam" id="PF01256">
    <property type="entry name" value="Carb_kinase"/>
    <property type="match status" value="1"/>
</dbReference>
<dbReference type="Pfam" id="PF03853">
    <property type="entry name" value="YjeF_N"/>
    <property type="match status" value="1"/>
</dbReference>
<dbReference type="PIRSF" id="PIRSF017184">
    <property type="entry name" value="Nnr"/>
    <property type="match status" value="1"/>
</dbReference>
<dbReference type="SUPFAM" id="SSF53613">
    <property type="entry name" value="Ribokinase-like"/>
    <property type="match status" value="1"/>
</dbReference>
<dbReference type="SUPFAM" id="SSF64153">
    <property type="entry name" value="YjeF N-terminal domain-like"/>
    <property type="match status" value="1"/>
</dbReference>
<dbReference type="PROSITE" id="PS01049">
    <property type="entry name" value="YJEF_C_1"/>
    <property type="match status" value="1"/>
</dbReference>
<dbReference type="PROSITE" id="PS01050">
    <property type="entry name" value="YJEF_C_2"/>
    <property type="match status" value="1"/>
</dbReference>
<dbReference type="PROSITE" id="PS51383">
    <property type="entry name" value="YJEF_C_3"/>
    <property type="match status" value="1"/>
</dbReference>
<dbReference type="PROSITE" id="PS51385">
    <property type="entry name" value="YJEF_N"/>
    <property type="match status" value="1"/>
</dbReference>
<proteinExistence type="inferred from homology"/>
<protein>
    <recommendedName>
        <fullName>Bifunctional NAD(P)H-hydrate repair enzyme Nnr</fullName>
    </recommendedName>
    <alternativeName>
        <fullName>Nicotinamide nucleotide repair protein</fullName>
    </alternativeName>
    <domain>
        <recommendedName>
            <fullName>ADP-dependent (S)-NAD(P)H-hydrate dehydratase</fullName>
            <ecNumber>4.2.1.136</ecNumber>
        </recommendedName>
        <alternativeName>
            <fullName>ADP-dependent NAD(P)HX dehydratase</fullName>
        </alternativeName>
    </domain>
    <domain>
        <recommendedName>
            <fullName>NAD(P)H-hydrate epimerase</fullName>
            <ecNumber>5.1.99.6</ecNumber>
        </recommendedName>
        <alternativeName>
            <fullName>NAD(P)HX epimerase</fullName>
        </alternativeName>
    </domain>
</protein>
<accession>P74217</accession>
<organism>
    <name type="scientific">Synechocystis sp. (strain ATCC 27184 / PCC 6803 / Kazusa)</name>
    <dbReference type="NCBI Taxonomy" id="1111708"/>
    <lineage>
        <taxon>Bacteria</taxon>
        <taxon>Bacillati</taxon>
        <taxon>Cyanobacteriota</taxon>
        <taxon>Cyanophyceae</taxon>
        <taxon>Synechococcales</taxon>
        <taxon>Merismopediaceae</taxon>
        <taxon>Synechocystis</taxon>
    </lineage>
</organism>
<keyword id="KW-0067">ATP-binding</keyword>
<keyword id="KW-0413">Isomerase</keyword>
<keyword id="KW-0456">Lyase</keyword>
<keyword id="KW-0479">Metal-binding</keyword>
<keyword id="KW-0511">Multifunctional enzyme</keyword>
<keyword id="KW-0520">NAD</keyword>
<keyword id="KW-0521">NADP</keyword>
<keyword id="KW-0547">Nucleotide-binding</keyword>
<keyword id="KW-0630">Potassium</keyword>
<keyword id="KW-1185">Reference proteome</keyword>
<comment type="function">
    <text evidence="1">Bifunctional enzyme that catalyzes the epimerization of the S- and R-forms of NAD(P)HX and the dehydration of the S-form of NAD(P)HX at the expense of ADP, which is converted to AMP. This allows the repair of both epimers of NAD(P)HX, a damaged form of NAD(P)H that is a result of enzymatic or heat-dependent hydration (By similarity).</text>
</comment>
<comment type="catalytic activity">
    <reaction>
        <text>(6S)-NADHX + ADP = AMP + phosphate + NADH + H(+)</text>
        <dbReference type="Rhea" id="RHEA:32223"/>
        <dbReference type="ChEBI" id="CHEBI:15378"/>
        <dbReference type="ChEBI" id="CHEBI:43474"/>
        <dbReference type="ChEBI" id="CHEBI:57945"/>
        <dbReference type="ChEBI" id="CHEBI:64074"/>
        <dbReference type="ChEBI" id="CHEBI:456215"/>
        <dbReference type="ChEBI" id="CHEBI:456216"/>
        <dbReference type="EC" id="4.2.1.136"/>
    </reaction>
</comment>
<comment type="catalytic activity">
    <reaction>
        <text>(6S)-NADPHX + ADP = AMP + phosphate + NADPH + H(+)</text>
        <dbReference type="Rhea" id="RHEA:32235"/>
        <dbReference type="ChEBI" id="CHEBI:15378"/>
        <dbReference type="ChEBI" id="CHEBI:43474"/>
        <dbReference type="ChEBI" id="CHEBI:57783"/>
        <dbReference type="ChEBI" id="CHEBI:64076"/>
        <dbReference type="ChEBI" id="CHEBI:456215"/>
        <dbReference type="ChEBI" id="CHEBI:456216"/>
        <dbReference type="EC" id="4.2.1.136"/>
    </reaction>
</comment>
<comment type="catalytic activity">
    <reaction>
        <text>(6R)-NADHX = (6S)-NADHX</text>
        <dbReference type="Rhea" id="RHEA:32215"/>
        <dbReference type="ChEBI" id="CHEBI:64074"/>
        <dbReference type="ChEBI" id="CHEBI:64075"/>
        <dbReference type="EC" id="5.1.99.6"/>
    </reaction>
</comment>
<comment type="catalytic activity">
    <reaction>
        <text>(6R)-NADPHX = (6S)-NADPHX</text>
        <dbReference type="Rhea" id="RHEA:32227"/>
        <dbReference type="ChEBI" id="CHEBI:64076"/>
        <dbReference type="ChEBI" id="CHEBI:64077"/>
        <dbReference type="EC" id="5.1.99.6"/>
    </reaction>
</comment>
<comment type="cofactor">
    <cofactor evidence="1">
        <name>K(+)</name>
        <dbReference type="ChEBI" id="CHEBI:29103"/>
    </cofactor>
    <text evidence="1">Binds 1 potassium ion per subunit.</text>
</comment>
<comment type="similarity">
    <text evidence="2">In the N-terminal section; belongs to the NnrE/AIBP family.</text>
</comment>
<comment type="similarity">
    <text evidence="2">In the C-terminal section; belongs to the NnrD/CARKD family.</text>
</comment>
<name>NNR_SYNY3</name>
<evidence type="ECO:0000250" key="1"/>
<evidence type="ECO:0000305" key="2"/>